<evidence type="ECO:0000255" key="1">
    <source>
        <dbReference type="HAMAP-Rule" id="MF_00306"/>
    </source>
</evidence>
<keyword id="KW-0963">Cytoplasm</keyword>
<keyword id="KW-0342">GTP-binding</keyword>
<keyword id="KW-0378">Hydrolase</keyword>
<keyword id="KW-0547">Nucleotide-binding</keyword>
<keyword id="KW-1185">Reference proteome</keyword>
<keyword id="KW-0687">Ribonucleoprotein</keyword>
<keyword id="KW-0694">RNA-binding</keyword>
<keyword id="KW-0733">Signal recognition particle</keyword>
<reference key="1">
    <citation type="journal article" date="2002" name="Proc. Natl. Acad. Sci. U.S.A.">
        <title>The complete genome of hyperthermophile Methanopyrus kandleri AV19 and monophyly of archaeal methanogens.</title>
        <authorList>
            <person name="Slesarev A.I."/>
            <person name="Mezhevaya K.V."/>
            <person name="Makarova K.S."/>
            <person name="Polushin N.N."/>
            <person name="Shcherbinina O.V."/>
            <person name="Shakhova V.V."/>
            <person name="Belova G.I."/>
            <person name="Aravind L."/>
            <person name="Natale D.A."/>
            <person name="Rogozin I.B."/>
            <person name="Tatusov R.L."/>
            <person name="Wolf Y.I."/>
            <person name="Stetter K.O."/>
            <person name="Malykh A.G."/>
            <person name="Koonin E.V."/>
            <person name="Kozyavkin S.A."/>
        </authorList>
    </citation>
    <scope>NUCLEOTIDE SEQUENCE [LARGE SCALE GENOMIC DNA]</scope>
    <source>
        <strain>AV19 / DSM 6324 / JCM 9639 / NBRC 100938</strain>
    </source>
</reference>
<proteinExistence type="inferred from homology"/>
<name>SRP54_METKA</name>
<organism>
    <name type="scientific">Methanopyrus kandleri (strain AV19 / DSM 6324 / JCM 9639 / NBRC 100938)</name>
    <dbReference type="NCBI Taxonomy" id="190192"/>
    <lineage>
        <taxon>Archaea</taxon>
        <taxon>Methanobacteriati</taxon>
        <taxon>Methanobacteriota</taxon>
        <taxon>Methanomada group</taxon>
        <taxon>Methanopyri</taxon>
        <taxon>Methanopyrales</taxon>
        <taxon>Methanopyraceae</taxon>
        <taxon>Methanopyrus</taxon>
    </lineage>
</organism>
<gene>
    <name evidence="1" type="primary">srp54</name>
    <name type="ordered locus">MK1612</name>
</gene>
<sequence>MIGFADRLAEITKKIKGASIIDEDFVKEVVRDVQRALLEADVDVKLVLELSKRIEKRALEEEPPAGVPKRDYLLRIVYEELVELLGGEKTEGLDIDLSRDVNVIMLVGLYGMGKTTTAAKLARYLQRKGYRVGLVGADPYRPAAGEQLRQLAEEVDVPVHVEDVDDAVEMAVKGVEALKDECDVVIVDTAGRDRLSEDLIDELREMAERIEPHEVLLVLDATVGQKAGDHAEAFHEAVQLTGVVITKLDTAAKGGGALSAVARTGAPIKFVGTGERVDDLEEFNPRSFVARLLGIGDIDELLRRTEEMLEEEEKAEDVLEGEFTLKDLYEQLEALSKMGPVDKLLQYVPGMGGGRNVRKISQITEERLKKYKVIMDSMTEKELENPEILNKSRIRRIAIGSGTSERDVIELLNHYRMMKDVIEDIQSGRIPRIGGELGRVIRNVLRG</sequence>
<accession>Q8TUY9</accession>
<protein>
    <recommendedName>
        <fullName evidence="1">Signal recognition particle 54 kDa protein</fullName>
        <shortName evidence="1">SRP54</shortName>
        <ecNumber evidence="1">3.6.5.4</ecNumber>
    </recommendedName>
</protein>
<feature type="chain" id="PRO_0000101178" description="Signal recognition particle 54 kDa protein">
    <location>
        <begin position="1"/>
        <end position="447"/>
    </location>
</feature>
<feature type="binding site" evidence="1">
    <location>
        <begin position="108"/>
        <end position="115"/>
    </location>
    <ligand>
        <name>GTP</name>
        <dbReference type="ChEBI" id="CHEBI:37565"/>
    </ligand>
</feature>
<feature type="binding site" evidence="1">
    <location>
        <begin position="188"/>
        <end position="192"/>
    </location>
    <ligand>
        <name>GTP</name>
        <dbReference type="ChEBI" id="CHEBI:37565"/>
    </ligand>
</feature>
<feature type="binding site" evidence="1">
    <location>
        <begin position="246"/>
        <end position="249"/>
    </location>
    <ligand>
        <name>GTP</name>
        <dbReference type="ChEBI" id="CHEBI:37565"/>
    </ligand>
</feature>
<dbReference type="EC" id="3.6.5.4" evidence="1"/>
<dbReference type="EMBL" id="AE009439">
    <property type="protein sequence ID" value="AAM02825.1"/>
    <property type="molecule type" value="Genomic_DNA"/>
</dbReference>
<dbReference type="RefSeq" id="WP_011019980.1">
    <property type="nucleotide sequence ID" value="NC_003551.1"/>
</dbReference>
<dbReference type="SMR" id="Q8TUY9"/>
<dbReference type="FunCoup" id="Q8TUY9">
    <property type="interactions" value="157"/>
</dbReference>
<dbReference type="STRING" id="190192.MK1612"/>
<dbReference type="PaxDb" id="190192-MK1612"/>
<dbReference type="EnsemblBacteria" id="AAM02825">
    <property type="protein sequence ID" value="AAM02825"/>
    <property type="gene ID" value="MK1612"/>
</dbReference>
<dbReference type="GeneID" id="1478207"/>
<dbReference type="KEGG" id="mka:MK1612"/>
<dbReference type="PATRIC" id="fig|190192.8.peg.1775"/>
<dbReference type="HOGENOM" id="CLU_009301_6_0_2"/>
<dbReference type="InParanoid" id="Q8TUY9"/>
<dbReference type="OrthoDB" id="52849at2157"/>
<dbReference type="Proteomes" id="UP000001826">
    <property type="component" value="Chromosome"/>
</dbReference>
<dbReference type="GO" id="GO:0048500">
    <property type="term" value="C:signal recognition particle"/>
    <property type="evidence" value="ECO:0007669"/>
    <property type="project" value="UniProtKB-UniRule"/>
</dbReference>
<dbReference type="GO" id="GO:0008312">
    <property type="term" value="F:7S RNA binding"/>
    <property type="evidence" value="ECO:0007669"/>
    <property type="project" value="UniProtKB-UniRule"/>
</dbReference>
<dbReference type="GO" id="GO:0016887">
    <property type="term" value="F:ATP hydrolysis activity"/>
    <property type="evidence" value="ECO:0007669"/>
    <property type="project" value="InterPro"/>
</dbReference>
<dbReference type="GO" id="GO:0005525">
    <property type="term" value="F:GTP binding"/>
    <property type="evidence" value="ECO:0007669"/>
    <property type="project" value="UniProtKB-UniRule"/>
</dbReference>
<dbReference type="GO" id="GO:0003924">
    <property type="term" value="F:GTPase activity"/>
    <property type="evidence" value="ECO:0007669"/>
    <property type="project" value="UniProtKB-UniRule"/>
</dbReference>
<dbReference type="GO" id="GO:0006614">
    <property type="term" value="P:SRP-dependent cotranslational protein targeting to membrane"/>
    <property type="evidence" value="ECO:0007669"/>
    <property type="project" value="InterPro"/>
</dbReference>
<dbReference type="CDD" id="cd17875">
    <property type="entry name" value="SRP54_G"/>
    <property type="match status" value="1"/>
</dbReference>
<dbReference type="FunFam" id="3.40.50.300:FF:000022">
    <property type="entry name" value="Signal recognition particle 54 kDa subunit"/>
    <property type="match status" value="1"/>
</dbReference>
<dbReference type="Gene3D" id="3.40.50.300">
    <property type="entry name" value="P-loop containing nucleotide triphosphate hydrolases"/>
    <property type="match status" value="1"/>
</dbReference>
<dbReference type="Gene3D" id="1.20.120.140">
    <property type="entry name" value="Signal recognition particle SRP54, nucleotide-binding domain"/>
    <property type="match status" value="1"/>
</dbReference>
<dbReference type="Gene3D" id="1.10.260.30">
    <property type="entry name" value="Signal recognition particle, SRP54 subunit, M-domain"/>
    <property type="match status" value="1"/>
</dbReference>
<dbReference type="HAMAP" id="MF_00306">
    <property type="entry name" value="SRP54"/>
    <property type="match status" value="1"/>
</dbReference>
<dbReference type="InterPro" id="IPR003593">
    <property type="entry name" value="AAA+_ATPase"/>
</dbReference>
<dbReference type="InterPro" id="IPR027417">
    <property type="entry name" value="P-loop_NTPase"/>
</dbReference>
<dbReference type="InterPro" id="IPR036891">
    <property type="entry name" value="Signal_recog_part_SRP54_M_sf"/>
</dbReference>
<dbReference type="InterPro" id="IPR013822">
    <property type="entry name" value="Signal_recog_particl_SRP54_hlx"/>
</dbReference>
<dbReference type="InterPro" id="IPR004125">
    <property type="entry name" value="Signal_recog_particle_SRP54_M"/>
</dbReference>
<dbReference type="InterPro" id="IPR036225">
    <property type="entry name" value="SRP/SRP_N"/>
</dbReference>
<dbReference type="InterPro" id="IPR022941">
    <property type="entry name" value="SRP54"/>
</dbReference>
<dbReference type="InterPro" id="IPR000897">
    <property type="entry name" value="SRP54_GTPase_dom"/>
</dbReference>
<dbReference type="InterPro" id="IPR042101">
    <property type="entry name" value="SRP54_N_sf"/>
</dbReference>
<dbReference type="PANTHER" id="PTHR11564">
    <property type="entry name" value="SIGNAL RECOGNITION PARTICLE 54K PROTEIN SRP54"/>
    <property type="match status" value="1"/>
</dbReference>
<dbReference type="PANTHER" id="PTHR11564:SF5">
    <property type="entry name" value="SIGNAL RECOGNITION PARTICLE SUBUNIT SRP54"/>
    <property type="match status" value="1"/>
</dbReference>
<dbReference type="Pfam" id="PF00448">
    <property type="entry name" value="SRP54"/>
    <property type="match status" value="1"/>
</dbReference>
<dbReference type="Pfam" id="PF02881">
    <property type="entry name" value="SRP54_N"/>
    <property type="match status" value="1"/>
</dbReference>
<dbReference type="Pfam" id="PF02978">
    <property type="entry name" value="SRP_SPB"/>
    <property type="match status" value="1"/>
</dbReference>
<dbReference type="SMART" id="SM00382">
    <property type="entry name" value="AAA"/>
    <property type="match status" value="1"/>
</dbReference>
<dbReference type="SMART" id="SM00962">
    <property type="entry name" value="SRP54"/>
    <property type="match status" value="1"/>
</dbReference>
<dbReference type="SMART" id="SM00963">
    <property type="entry name" value="SRP54_N"/>
    <property type="match status" value="1"/>
</dbReference>
<dbReference type="SUPFAM" id="SSF47364">
    <property type="entry name" value="Domain of the SRP/SRP receptor G-proteins"/>
    <property type="match status" value="1"/>
</dbReference>
<dbReference type="SUPFAM" id="SSF52540">
    <property type="entry name" value="P-loop containing nucleoside triphosphate hydrolases"/>
    <property type="match status" value="1"/>
</dbReference>
<dbReference type="SUPFAM" id="SSF47446">
    <property type="entry name" value="Signal peptide-binding domain"/>
    <property type="match status" value="1"/>
</dbReference>
<dbReference type="PROSITE" id="PS00300">
    <property type="entry name" value="SRP54"/>
    <property type="match status" value="1"/>
</dbReference>
<comment type="function">
    <text evidence="1">Involved in targeting and insertion of nascent membrane proteins into the cytoplasmic membrane. Binds to the hydrophobic signal sequence of the ribosome-nascent chain (RNC) as it emerges from the ribosomes. The SRP-RNC complex is then targeted to the cytoplasmic membrane where it interacts with the SRP receptor FtsY.</text>
</comment>
<comment type="catalytic activity">
    <reaction evidence="1">
        <text>GTP + H2O = GDP + phosphate + H(+)</text>
        <dbReference type="Rhea" id="RHEA:19669"/>
        <dbReference type="ChEBI" id="CHEBI:15377"/>
        <dbReference type="ChEBI" id="CHEBI:15378"/>
        <dbReference type="ChEBI" id="CHEBI:37565"/>
        <dbReference type="ChEBI" id="CHEBI:43474"/>
        <dbReference type="ChEBI" id="CHEBI:58189"/>
        <dbReference type="EC" id="3.6.5.4"/>
    </reaction>
</comment>
<comment type="subunit">
    <text evidence="1">Part of the signal recognition particle protein translocation system, which is composed of SRP and FtsY. Archaeal SRP consists of a 7S RNA molecule of 300 nucleotides and two protein subunits: SRP54 and SRP19.</text>
</comment>
<comment type="subcellular location">
    <subcellularLocation>
        <location evidence="1">Cytoplasm</location>
    </subcellularLocation>
    <text evidence="1">The SRP-RNC complex is targeted to the cytoplasmic membrane.</text>
</comment>
<comment type="domain">
    <text evidence="1">Composed of three domains: the N-terminal N domain, which is responsible for interactions with the ribosome, the central G domain, which binds GTP, and the C-terminal M domain, which binds the RNA and the signal sequence of the RNC.</text>
</comment>
<comment type="similarity">
    <text evidence="1">Belongs to the GTP-binding SRP family. SRP54 subfamily.</text>
</comment>